<gene>
    <name evidence="1" type="primary">lpxB</name>
    <name type="ordered locus">PSPTO_1547</name>
</gene>
<name>LPXB_PSESM</name>
<proteinExistence type="inferred from homology"/>
<protein>
    <recommendedName>
        <fullName evidence="1">Lipid-A-disaccharide synthase</fullName>
        <ecNumber evidence="1">2.4.1.182</ecNumber>
    </recommendedName>
</protein>
<organism>
    <name type="scientific">Pseudomonas syringae pv. tomato (strain ATCC BAA-871 / DC3000)</name>
    <dbReference type="NCBI Taxonomy" id="223283"/>
    <lineage>
        <taxon>Bacteria</taxon>
        <taxon>Pseudomonadati</taxon>
        <taxon>Pseudomonadota</taxon>
        <taxon>Gammaproteobacteria</taxon>
        <taxon>Pseudomonadales</taxon>
        <taxon>Pseudomonadaceae</taxon>
        <taxon>Pseudomonas</taxon>
    </lineage>
</organism>
<dbReference type="EC" id="2.4.1.182" evidence="1"/>
<dbReference type="EMBL" id="AE016853">
    <property type="protein sequence ID" value="AAO55067.1"/>
    <property type="molecule type" value="Genomic_DNA"/>
</dbReference>
<dbReference type="RefSeq" id="NP_791372.1">
    <property type="nucleotide sequence ID" value="NC_004578.1"/>
</dbReference>
<dbReference type="RefSeq" id="WP_011103595.1">
    <property type="nucleotide sequence ID" value="NC_004578.1"/>
</dbReference>
<dbReference type="SMR" id="Q886N0"/>
<dbReference type="STRING" id="223283.PSPTO_1547"/>
<dbReference type="CAZy" id="GT19">
    <property type="family name" value="Glycosyltransferase Family 19"/>
</dbReference>
<dbReference type="DNASU" id="1183184"/>
<dbReference type="GeneID" id="1183184"/>
<dbReference type="KEGG" id="pst:PSPTO_1547"/>
<dbReference type="PATRIC" id="fig|223283.9.peg.1573"/>
<dbReference type="eggNOG" id="COG0763">
    <property type="taxonomic scope" value="Bacteria"/>
</dbReference>
<dbReference type="HOGENOM" id="CLU_036577_3_0_6"/>
<dbReference type="OrthoDB" id="9801642at2"/>
<dbReference type="PhylomeDB" id="Q886N0"/>
<dbReference type="UniPathway" id="UPA00973"/>
<dbReference type="Proteomes" id="UP000002515">
    <property type="component" value="Chromosome"/>
</dbReference>
<dbReference type="GO" id="GO:0016020">
    <property type="term" value="C:membrane"/>
    <property type="evidence" value="ECO:0007669"/>
    <property type="project" value="GOC"/>
</dbReference>
<dbReference type="GO" id="GO:0008915">
    <property type="term" value="F:lipid-A-disaccharide synthase activity"/>
    <property type="evidence" value="ECO:0007669"/>
    <property type="project" value="UniProtKB-UniRule"/>
</dbReference>
<dbReference type="GO" id="GO:0005543">
    <property type="term" value="F:phospholipid binding"/>
    <property type="evidence" value="ECO:0007669"/>
    <property type="project" value="TreeGrafter"/>
</dbReference>
<dbReference type="GO" id="GO:0009245">
    <property type="term" value="P:lipid A biosynthetic process"/>
    <property type="evidence" value="ECO:0007669"/>
    <property type="project" value="UniProtKB-UniRule"/>
</dbReference>
<dbReference type="Gene3D" id="3.40.50.2000">
    <property type="entry name" value="Glycogen Phosphorylase B"/>
    <property type="match status" value="1"/>
</dbReference>
<dbReference type="HAMAP" id="MF_00392">
    <property type="entry name" value="LpxB"/>
    <property type="match status" value="1"/>
</dbReference>
<dbReference type="InterPro" id="IPR003835">
    <property type="entry name" value="Glyco_trans_19"/>
</dbReference>
<dbReference type="NCBIfam" id="TIGR00215">
    <property type="entry name" value="lpxB"/>
    <property type="match status" value="1"/>
</dbReference>
<dbReference type="PANTHER" id="PTHR30372">
    <property type="entry name" value="LIPID-A-DISACCHARIDE SYNTHASE"/>
    <property type="match status" value="1"/>
</dbReference>
<dbReference type="PANTHER" id="PTHR30372:SF4">
    <property type="entry name" value="LIPID-A-DISACCHARIDE SYNTHASE, MITOCHONDRIAL-RELATED"/>
    <property type="match status" value="1"/>
</dbReference>
<dbReference type="Pfam" id="PF02684">
    <property type="entry name" value="LpxB"/>
    <property type="match status" value="1"/>
</dbReference>
<dbReference type="SUPFAM" id="SSF53756">
    <property type="entry name" value="UDP-Glycosyltransferase/glycogen phosphorylase"/>
    <property type="match status" value="1"/>
</dbReference>
<feature type="chain" id="PRO_0000190179" description="Lipid-A-disaccharide synthase">
    <location>
        <begin position="1"/>
        <end position="380"/>
    </location>
</feature>
<sequence length="380" mass="41686">MTSPLRIALVAGEASGDILGSGLMRALKARHPDVRFIGVGGPLMEAEGMQSYFPMERLSVMGLVEVLGRLRELLARRKLLVQTLIDEKPDVFIGIDAPDFTLNIELQLRRAGIKTVHYVSPSVWAWRQKRVLKIREGCDLMLTLLPFEARFYEEKGVPVRFVGHPLADTIPLESDRGATRAELGLSVDGPVVALMPGSRGGEVGRLGALFFDAAERLLVERPGLRFVLPCASPQRRAQVEQLLQGRDLPITLLDGRSHVALAACDAVLIASGTATLEALLYKRPMVVAYRMAPLTFWVLKRLVKSPYVSLPNLLAQRLLVPELLQDDATPEALARTLLPLIEDGHAQTEGFDAIHRILRRDASNQAADAVLSLLGLPLSL</sequence>
<comment type="function">
    <text evidence="1">Condensation of UDP-2,3-diacylglucosamine and 2,3-diacylglucosamine-1-phosphate to form lipid A disaccharide, a precursor of lipid A, a phosphorylated glycolipid that anchors the lipopolysaccharide to the outer membrane of the cell.</text>
</comment>
<comment type="catalytic activity">
    <reaction evidence="1">
        <text>a lipid X + a UDP-2-N,3-O-bis[(3R)-3-hydroxyacyl]-alpha-D-glucosamine = a lipid A disaccharide + UDP + H(+)</text>
        <dbReference type="Rhea" id="RHEA:67828"/>
        <dbReference type="ChEBI" id="CHEBI:15378"/>
        <dbReference type="ChEBI" id="CHEBI:58223"/>
        <dbReference type="ChEBI" id="CHEBI:137748"/>
        <dbReference type="ChEBI" id="CHEBI:176338"/>
        <dbReference type="ChEBI" id="CHEBI:176343"/>
        <dbReference type="EC" id="2.4.1.182"/>
    </reaction>
</comment>
<comment type="pathway">
    <text evidence="1">Bacterial outer membrane biogenesis; LPS lipid A biosynthesis.</text>
</comment>
<comment type="similarity">
    <text evidence="1">Belongs to the LpxB family.</text>
</comment>
<evidence type="ECO:0000255" key="1">
    <source>
        <dbReference type="HAMAP-Rule" id="MF_00392"/>
    </source>
</evidence>
<keyword id="KW-0328">Glycosyltransferase</keyword>
<keyword id="KW-0441">Lipid A biosynthesis</keyword>
<keyword id="KW-0444">Lipid biosynthesis</keyword>
<keyword id="KW-0443">Lipid metabolism</keyword>
<keyword id="KW-1185">Reference proteome</keyword>
<keyword id="KW-0808">Transferase</keyword>
<accession>Q886N0</accession>
<reference key="1">
    <citation type="journal article" date="2003" name="Proc. Natl. Acad. Sci. U.S.A.">
        <title>The complete genome sequence of the Arabidopsis and tomato pathogen Pseudomonas syringae pv. tomato DC3000.</title>
        <authorList>
            <person name="Buell C.R."/>
            <person name="Joardar V."/>
            <person name="Lindeberg M."/>
            <person name="Selengut J."/>
            <person name="Paulsen I.T."/>
            <person name="Gwinn M.L."/>
            <person name="Dodson R.J."/>
            <person name="DeBoy R.T."/>
            <person name="Durkin A.S."/>
            <person name="Kolonay J.F."/>
            <person name="Madupu R."/>
            <person name="Daugherty S.C."/>
            <person name="Brinkac L.M."/>
            <person name="Beanan M.J."/>
            <person name="Haft D.H."/>
            <person name="Nelson W.C."/>
            <person name="Davidsen T.M."/>
            <person name="Zafar N."/>
            <person name="Zhou L."/>
            <person name="Liu J."/>
            <person name="Yuan Q."/>
            <person name="Khouri H.M."/>
            <person name="Fedorova N.B."/>
            <person name="Tran B."/>
            <person name="Russell D."/>
            <person name="Berry K.J."/>
            <person name="Utterback T.R."/>
            <person name="Van Aken S.E."/>
            <person name="Feldblyum T.V."/>
            <person name="D'Ascenzo M."/>
            <person name="Deng W.-L."/>
            <person name="Ramos A.R."/>
            <person name="Alfano J.R."/>
            <person name="Cartinhour S."/>
            <person name="Chatterjee A.K."/>
            <person name="Delaney T.P."/>
            <person name="Lazarowitz S.G."/>
            <person name="Martin G.B."/>
            <person name="Schneider D.J."/>
            <person name="Tang X."/>
            <person name="Bender C.L."/>
            <person name="White O."/>
            <person name="Fraser C.M."/>
            <person name="Collmer A."/>
        </authorList>
    </citation>
    <scope>NUCLEOTIDE SEQUENCE [LARGE SCALE GENOMIC DNA]</scope>
    <source>
        <strain>ATCC BAA-871 / DC3000</strain>
    </source>
</reference>